<gene>
    <name type="primary">ugpE</name>
    <name type="ordered locus">BAB2_0583</name>
</gene>
<sequence length="282" mass="32052">MIEQRPVSNLIGHLILILGIIIVAFPIYYTFVASSMTSTQIIRPPISLLPGDHLVENYREAIFGGVERVVGVSLERLLWNSFVVAMAIAVGKIIISFMSAFAIVFFRFPMRMFFFWMIFITLMLPVEVRILPTYKVIVDLGMIDTYAGLTLPLMASATATFLFRQFFLTIPGELVEAARIDNAGPFRFMRDILLPLSKTNIAALFVILFIYGWTQYLWPLLVTNDAKMNTIIIGLRRMVDWADASTPWNYVMVTAILAIIPLILVVVLMQRWFVKGLVETEK</sequence>
<evidence type="ECO:0000250" key="1">
    <source>
        <dbReference type="UniProtKB" id="P10906"/>
    </source>
</evidence>
<evidence type="ECO:0000255" key="2"/>
<evidence type="ECO:0000255" key="3">
    <source>
        <dbReference type="PROSITE-ProRule" id="PRU00441"/>
    </source>
</evidence>
<evidence type="ECO:0000305" key="4"/>
<keyword id="KW-0997">Cell inner membrane</keyword>
<keyword id="KW-1003">Cell membrane</keyword>
<keyword id="KW-0472">Membrane</keyword>
<keyword id="KW-1185">Reference proteome</keyword>
<keyword id="KW-0812">Transmembrane</keyword>
<keyword id="KW-1133">Transmembrane helix</keyword>
<keyword id="KW-0813">Transport</keyword>
<feature type="chain" id="PRO_0000290138" description="sn-glycerol-3-phosphate transport system permease protein UgpE">
    <location>
        <begin position="1"/>
        <end position="282"/>
    </location>
</feature>
<feature type="transmembrane region" description="Helical" evidence="3">
    <location>
        <begin position="14"/>
        <end position="34"/>
    </location>
</feature>
<feature type="transmembrane region" description="Helical" evidence="3">
    <location>
        <begin position="86"/>
        <end position="106"/>
    </location>
</feature>
<feature type="transmembrane region" description="Helical" evidence="3">
    <location>
        <begin position="112"/>
        <end position="132"/>
    </location>
</feature>
<feature type="transmembrane region" description="Helical" evidence="3">
    <location>
        <begin position="146"/>
        <end position="168"/>
    </location>
</feature>
<feature type="transmembrane region" description="Helical" evidence="3">
    <location>
        <begin position="201"/>
        <end position="221"/>
    </location>
</feature>
<feature type="transmembrane region" description="Helical" evidence="3">
    <location>
        <begin position="248"/>
        <end position="268"/>
    </location>
</feature>
<feature type="domain" description="ABC transmembrane type-1" evidence="3">
    <location>
        <begin position="78"/>
        <end position="269"/>
    </location>
</feature>
<comment type="function">
    <text evidence="1">Part of the ABC transporter complex UgpBAEC involved in sn-glycerol-3-phosphate (G3P) import. Probably responsible for the translocation of the substrate across the membrane.</text>
</comment>
<comment type="subunit">
    <text evidence="1">The complex is composed of two ATP-binding proteins (UgpC), two transmembrane proteins (UgpA and UgpE) and a solute-binding protein (UgpB).</text>
</comment>
<comment type="subcellular location">
    <subcellularLocation>
        <location evidence="1">Cell inner membrane</location>
        <topology evidence="2">Multi-pass membrane protein</topology>
    </subcellularLocation>
</comment>
<comment type="similarity">
    <text evidence="4">Belongs to the binding-protein-dependent transport system permease family.</text>
</comment>
<accession>Q2YKR7</accession>
<proteinExistence type="inferred from homology"/>
<reference key="1">
    <citation type="journal article" date="2005" name="Infect. Immun.">
        <title>Whole-genome analyses of speciation events in pathogenic Brucellae.</title>
        <authorList>
            <person name="Chain P.S."/>
            <person name="Comerci D.J."/>
            <person name="Tolmasky M.E."/>
            <person name="Larimer F.W."/>
            <person name="Malfatti S.A."/>
            <person name="Vergez L.M."/>
            <person name="Aguero F."/>
            <person name="Land M.L."/>
            <person name="Ugalde R.A."/>
            <person name="Garcia E."/>
        </authorList>
    </citation>
    <scope>NUCLEOTIDE SEQUENCE [LARGE SCALE GENOMIC DNA]</scope>
    <source>
        <strain>2308</strain>
    </source>
</reference>
<organism>
    <name type="scientific">Brucella abortus (strain 2308)</name>
    <dbReference type="NCBI Taxonomy" id="359391"/>
    <lineage>
        <taxon>Bacteria</taxon>
        <taxon>Pseudomonadati</taxon>
        <taxon>Pseudomonadota</taxon>
        <taxon>Alphaproteobacteria</taxon>
        <taxon>Hyphomicrobiales</taxon>
        <taxon>Brucellaceae</taxon>
        <taxon>Brucella/Ochrobactrum group</taxon>
        <taxon>Brucella</taxon>
    </lineage>
</organism>
<dbReference type="EMBL" id="AM040265">
    <property type="protein sequence ID" value="CAJ12749.1"/>
    <property type="molecule type" value="Genomic_DNA"/>
</dbReference>
<dbReference type="RefSeq" id="WP_002968959.1">
    <property type="nucleotide sequence ID" value="NZ_KN046823.1"/>
</dbReference>
<dbReference type="SMR" id="Q2YKR7"/>
<dbReference type="STRING" id="359391.BAB2_0583"/>
<dbReference type="GeneID" id="93015522"/>
<dbReference type="KEGG" id="bmf:BAB2_0583"/>
<dbReference type="PATRIC" id="fig|359391.11.peg.2768"/>
<dbReference type="HOGENOM" id="CLU_016047_1_1_5"/>
<dbReference type="Proteomes" id="UP000002719">
    <property type="component" value="Chromosome II"/>
</dbReference>
<dbReference type="GO" id="GO:0005886">
    <property type="term" value="C:plasma membrane"/>
    <property type="evidence" value="ECO:0007669"/>
    <property type="project" value="UniProtKB-SubCell"/>
</dbReference>
<dbReference type="GO" id="GO:0055085">
    <property type="term" value="P:transmembrane transport"/>
    <property type="evidence" value="ECO:0007669"/>
    <property type="project" value="InterPro"/>
</dbReference>
<dbReference type="CDD" id="cd06261">
    <property type="entry name" value="TM_PBP2"/>
    <property type="match status" value="1"/>
</dbReference>
<dbReference type="Gene3D" id="1.10.3720.10">
    <property type="entry name" value="MetI-like"/>
    <property type="match status" value="1"/>
</dbReference>
<dbReference type="InterPro" id="IPR000515">
    <property type="entry name" value="MetI-like"/>
</dbReference>
<dbReference type="InterPro" id="IPR035906">
    <property type="entry name" value="MetI-like_sf"/>
</dbReference>
<dbReference type="NCBIfam" id="NF008210">
    <property type="entry name" value="PRK10973.1"/>
    <property type="match status" value="1"/>
</dbReference>
<dbReference type="PANTHER" id="PTHR43744">
    <property type="entry name" value="ABC TRANSPORTER PERMEASE PROTEIN MG189-RELATED-RELATED"/>
    <property type="match status" value="1"/>
</dbReference>
<dbReference type="PANTHER" id="PTHR43744:SF8">
    <property type="entry name" value="SN-GLYCEROL-3-PHOSPHATE TRANSPORT SYSTEM PERMEASE PROTEIN UGPE"/>
    <property type="match status" value="1"/>
</dbReference>
<dbReference type="Pfam" id="PF00528">
    <property type="entry name" value="BPD_transp_1"/>
    <property type="match status" value="1"/>
</dbReference>
<dbReference type="SUPFAM" id="SSF161098">
    <property type="entry name" value="MetI-like"/>
    <property type="match status" value="1"/>
</dbReference>
<dbReference type="PROSITE" id="PS50928">
    <property type="entry name" value="ABC_TM1"/>
    <property type="match status" value="1"/>
</dbReference>
<protein>
    <recommendedName>
        <fullName evidence="1">sn-glycerol-3-phosphate transport system permease protein UgpE</fullName>
    </recommendedName>
</protein>
<name>UGPE_BRUA2</name>